<comment type="function">
    <text evidence="1">Large subunit of the glutamine-dependent carbamoyl phosphate synthetase (CPSase). CPSase catalyzes the formation of carbamoyl phosphate from the ammonia moiety of glutamine, carbonate, and phosphate donated by ATP, constituting the first step of 2 biosynthetic pathways, one leading to arginine and/or urea and the other to pyrimidine nucleotides. The large subunit (synthetase) binds the substrates ammonia (free or transferred from glutamine from the small subunit), hydrogencarbonate and ATP and carries out an ATP-coupled ligase reaction, activating hydrogencarbonate by forming carboxy phosphate which reacts with ammonia to form carbamoyl phosphate.</text>
</comment>
<comment type="catalytic activity">
    <reaction evidence="1">
        <text>hydrogencarbonate + L-glutamine + 2 ATP + H2O = carbamoyl phosphate + L-glutamate + 2 ADP + phosphate + 2 H(+)</text>
        <dbReference type="Rhea" id="RHEA:18633"/>
        <dbReference type="ChEBI" id="CHEBI:15377"/>
        <dbReference type="ChEBI" id="CHEBI:15378"/>
        <dbReference type="ChEBI" id="CHEBI:17544"/>
        <dbReference type="ChEBI" id="CHEBI:29985"/>
        <dbReference type="ChEBI" id="CHEBI:30616"/>
        <dbReference type="ChEBI" id="CHEBI:43474"/>
        <dbReference type="ChEBI" id="CHEBI:58228"/>
        <dbReference type="ChEBI" id="CHEBI:58359"/>
        <dbReference type="ChEBI" id="CHEBI:456216"/>
        <dbReference type="EC" id="6.3.5.5"/>
    </reaction>
</comment>
<comment type="catalytic activity">
    <reaction evidence="1">
        <text>hydrogencarbonate + NH4(+) + 2 ATP = carbamoyl phosphate + 2 ADP + phosphate + 2 H(+)</text>
        <dbReference type="Rhea" id="RHEA:18029"/>
        <dbReference type="ChEBI" id="CHEBI:15378"/>
        <dbReference type="ChEBI" id="CHEBI:17544"/>
        <dbReference type="ChEBI" id="CHEBI:28938"/>
        <dbReference type="ChEBI" id="CHEBI:30616"/>
        <dbReference type="ChEBI" id="CHEBI:43474"/>
        <dbReference type="ChEBI" id="CHEBI:58228"/>
        <dbReference type="ChEBI" id="CHEBI:456216"/>
        <dbReference type="EC" id="6.3.4.16"/>
    </reaction>
</comment>
<comment type="cofactor">
    <cofactor evidence="1">
        <name>Mg(2+)</name>
        <dbReference type="ChEBI" id="CHEBI:18420"/>
    </cofactor>
    <cofactor evidence="1">
        <name>Mn(2+)</name>
        <dbReference type="ChEBI" id="CHEBI:29035"/>
    </cofactor>
    <text evidence="3">Binds 2 Mg(2+) or Mn(2+) ions per subunit.</text>
</comment>
<comment type="pathway">
    <text evidence="1">Amino-acid biosynthesis; L-arginine biosynthesis; carbamoyl phosphate from bicarbonate: step 1/1.</text>
</comment>
<comment type="pathway">
    <text evidence="1">Pyrimidine metabolism; UMP biosynthesis via de novo pathway; (S)-dihydroorotate from bicarbonate: step 1/3.</text>
</comment>
<comment type="subunit">
    <text evidence="1">Composed of two chains; the small (or glutamine) chain promotes the hydrolysis of glutamine to ammonia, which is used by the large (or ammonia) chain to synthesize carbamoyl phosphate. Tetramer of heterodimers (alpha,beta)4.</text>
</comment>
<comment type="domain">
    <text evidence="3">Corresponds to the C-terminal section.</text>
</comment>
<comment type="domain">
    <text evidence="1">The large subunit is composed of 2 ATP-grasp domains that are involved in binding the 2 ATP molecules needed for carbamoyl phosphate synthesis. The N-terminal ATP-grasp domain (referred to as the carboxyphosphate synthetic component) catalyzes the ATP-dependent phosphorylation of hydrogencarbonate to carboxyphosphate and the subsequent nucleophilic attack by ammonia to form a carbamate intermediate. The C-terminal ATP-grasp domain (referred to as the carbamoyl phosphate synthetic component) then catalyzes the phosphorylation of carbamate with the second ATP to form the end product carbamoyl phosphate. The reactive and unstable enzyme intermediates are sequentially channeled from one active site to the next through the interior of the protein over a distance of at least 96 A.</text>
</comment>
<comment type="similarity">
    <text evidence="3">Belongs to the CarB family.</text>
</comment>
<comment type="caution">
    <text evidence="3">CarB is split into two genes in M.kandleri (MK0911 and MK1666).</text>
</comment>
<protein>
    <recommendedName>
        <fullName evidence="3">Carbamoyl phosphate synthase large chain, C-terminal section</fullName>
        <ecNumber evidence="1">6.3.4.16</ecNumber>
        <ecNumber evidence="1">6.3.5.5</ecNumber>
    </recommendedName>
    <alternativeName>
        <fullName>Carbamoyl phosphate synthetase ammonia chain</fullName>
    </alternativeName>
</protein>
<sequence length="542" mass="59225">MSDKVLVIGAGPNRIGQGIEFDYCTVHAVWAIQEEGYKAIIVNNNPETVSTDYDTSDKLYFEPITLEDVLNIVEKERPIGVLTQFGGQTSVNLTVPLAERGVRVLGTDPDDVDRLEDRDRFSKLLKKLGIPQPESGTANDPEEAVEVAEDIGYPVLVRPSYVIGGRAMEIVYDEEDLRRYIEEAAKVSPEHPILIDRFIEGGIECEIDGARDEAGNVLIPGIMEHIEEAGVHSGDSACVVPPQTLPEHAQETVLEYAEDIAEGANVIGLINIQFVYDPEEDEVYVIEANPRASRTVPFISKAVGIPLAKIGTKAILGREIPEVLDEMGLEPPDGDPGIVAVKEAVFSFEKWPGVDPVLGPEMKATGEVMGIDRTFGAAYWKAQLAAGHELPLEGTAVISVADRDKPDIVPIARKLQRLGFDLLATRGTASHLREHGIECEVVRKVSEGSPNIVDLIREGEIDLIINTPTEGKDARRDGYAIRRAAVKFKVPYITTIAAAKAAVEAIELVKEKGVTVNCLHDIHKGDWTPREVKPEELTRYGG</sequence>
<accession>Q8TUT7</accession>
<reference key="1">
    <citation type="journal article" date="2002" name="Proc. Natl. Acad. Sci. U.S.A.">
        <title>The complete genome of hyperthermophile Methanopyrus kandleri AV19 and monophyly of archaeal methanogens.</title>
        <authorList>
            <person name="Slesarev A.I."/>
            <person name="Mezhevaya K.V."/>
            <person name="Makarova K.S."/>
            <person name="Polushin N.N."/>
            <person name="Shcherbinina O.V."/>
            <person name="Shakhova V.V."/>
            <person name="Belova G.I."/>
            <person name="Aravind L."/>
            <person name="Natale D.A."/>
            <person name="Rogozin I.B."/>
            <person name="Tatusov R.L."/>
            <person name="Wolf Y.I."/>
            <person name="Stetter K.O."/>
            <person name="Malykh A.G."/>
            <person name="Koonin E.V."/>
            <person name="Kozyavkin S.A."/>
        </authorList>
    </citation>
    <scope>NUCLEOTIDE SEQUENCE [LARGE SCALE GENOMIC DNA]</scope>
    <source>
        <strain>AV19 / DSM 6324 / JCM 9639 / NBRC 100938</strain>
    </source>
</reference>
<evidence type="ECO:0000250" key="1">
    <source>
        <dbReference type="UniProtKB" id="P00968"/>
    </source>
</evidence>
<evidence type="ECO:0000255" key="2">
    <source>
        <dbReference type="PROSITE-ProRule" id="PRU00409"/>
    </source>
</evidence>
<evidence type="ECO:0000305" key="3"/>
<gene>
    <name type="primary">carB2</name>
    <name type="synonym">carB_3</name>
    <name type="ordered locus">MK1666</name>
</gene>
<proteinExistence type="inferred from homology"/>
<keyword id="KW-0028">Amino-acid biosynthesis</keyword>
<keyword id="KW-0055">Arginine biosynthesis</keyword>
<keyword id="KW-0067">ATP-binding</keyword>
<keyword id="KW-0436">Ligase</keyword>
<keyword id="KW-0460">Magnesium</keyword>
<keyword id="KW-0464">Manganese</keyword>
<keyword id="KW-0479">Metal-binding</keyword>
<keyword id="KW-0547">Nucleotide-binding</keyword>
<keyword id="KW-0665">Pyrimidine biosynthesis</keyword>
<keyword id="KW-1185">Reference proteome</keyword>
<keyword id="KW-0677">Repeat</keyword>
<feature type="chain" id="PRO_0000145078" description="Carbamoyl phosphate synthase large chain, C-terminal section">
    <location>
        <begin position="1"/>
        <end position="542"/>
    </location>
</feature>
<feature type="domain" description="ATP-grasp" evidence="1">
    <location>
        <begin position="122"/>
        <end position="316"/>
    </location>
</feature>
<feature type="domain" description="MGS-like" evidence="1">
    <location>
        <begin position="388"/>
        <end position="542"/>
    </location>
</feature>
<feature type="region of interest" description="Carbamoyl phosphate synthetic domain" evidence="1">
    <location>
        <begin position="1"/>
        <end position="389"/>
    </location>
</feature>
<feature type="region of interest" description="Allosteric domain" evidence="1">
    <location>
        <begin position="390"/>
        <end position="542"/>
    </location>
</feature>
<feature type="binding site" evidence="1">
    <location>
        <position position="158"/>
    </location>
    <ligand>
        <name>ATP</name>
        <dbReference type="ChEBI" id="CHEBI:30616"/>
        <label>2</label>
    </ligand>
</feature>
<feature type="binding site" evidence="1">
    <location>
        <position position="197"/>
    </location>
    <ligand>
        <name>ATP</name>
        <dbReference type="ChEBI" id="CHEBI:30616"/>
        <label>2</label>
    </ligand>
</feature>
<feature type="binding site" evidence="1">
    <location>
        <position position="199"/>
    </location>
    <ligand>
        <name>ATP</name>
        <dbReference type="ChEBI" id="CHEBI:30616"/>
        <label>2</label>
    </ligand>
</feature>
<feature type="binding site" evidence="1">
    <location>
        <position position="204"/>
    </location>
    <ligand>
        <name>ATP</name>
        <dbReference type="ChEBI" id="CHEBI:30616"/>
        <label>2</label>
    </ligand>
</feature>
<feature type="binding site" evidence="1">
    <location>
        <position position="230"/>
    </location>
    <ligand>
        <name>ATP</name>
        <dbReference type="ChEBI" id="CHEBI:30616"/>
        <label>2</label>
    </ligand>
</feature>
<feature type="binding site" evidence="1">
    <location>
        <position position="231"/>
    </location>
    <ligand>
        <name>ATP</name>
        <dbReference type="ChEBI" id="CHEBI:30616"/>
        <label>2</label>
    </ligand>
</feature>
<feature type="binding site" evidence="1">
    <location>
        <position position="232"/>
    </location>
    <ligand>
        <name>ATP</name>
        <dbReference type="ChEBI" id="CHEBI:30616"/>
        <label>2</label>
    </ligand>
</feature>
<feature type="binding site" evidence="1">
    <location>
        <position position="233"/>
    </location>
    <ligand>
        <name>ATP</name>
        <dbReference type="ChEBI" id="CHEBI:30616"/>
        <label>2</label>
    </ligand>
</feature>
<feature type="binding site" evidence="1">
    <location>
        <position position="273"/>
    </location>
    <ligand>
        <name>ATP</name>
        <dbReference type="ChEBI" id="CHEBI:30616"/>
        <label>2</label>
    </ligand>
</feature>
<feature type="binding site" evidence="2">
    <location>
        <position position="273"/>
    </location>
    <ligand>
        <name>Mg(2+)</name>
        <dbReference type="ChEBI" id="CHEBI:18420"/>
        <label>1</label>
    </ligand>
</feature>
<feature type="binding site" evidence="2">
    <location>
        <position position="273"/>
    </location>
    <ligand>
        <name>Mn(2+)</name>
        <dbReference type="ChEBI" id="CHEBI:29035"/>
        <label>1</label>
    </ligand>
</feature>
<feature type="binding site" evidence="1">
    <location>
        <position position="287"/>
    </location>
    <ligand>
        <name>ATP</name>
        <dbReference type="ChEBI" id="CHEBI:30616"/>
        <label>2</label>
    </ligand>
</feature>
<feature type="binding site" evidence="2">
    <location>
        <position position="287"/>
    </location>
    <ligand>
        <name>Mg(2+)</name>
        <dbReference type="ChEBI" id="CHEBI:18420"/>
        <label>1</label>
    </ligand>
</feature>
<feature type="binding site" evidence="2">
    <location>
        <position position="287"/>
    </location>
    <ligand>
        <name>Mg(2+)</name>
        <dbReference type="ChEBI" id="CHEBI:18420"/>
        <label>2</label>
    </ligand>
</feature>
<feature type="binding site" evidence="2">
    <location>
        <position position="287"/>
    </location>
    <ligand>
        <name>Mn(2+)</name>
        <dbReference type="ChEBI" id="CHEBI:29035"/>
        <label>1</label>
    </ligand>
</feature>
<feature type="binding site" evidence="2">
    <location>
        <position position="287"/>
    </location>
    <ligand>
        <name>Mn(2+)</name>
        <dbReference type="ChEBI" id="CHEBI:29035"/>
        <label>2</label>
    </ligand>
</feature>
<feature type="binding site" evidence="2">
    <location>
        <position position="289"/>
    </location>
    <ligand>
        <name>Mg(2+)</name>
        <dbReference type="ChEBI" id="CHEBI:18420"/>
        <label>2</label>
    </ligand>
</feature>
<feature type="binding site" evidence="2">
    <location>
        <position position="289"/>
    </location>
    <ligand>
        <name>Mn(2+)</name>
        <dbReference type="ChEBI" id="CHEBI:29035"/>
        <label>2</label>
    </ligand>
</feature>
<organism>
    <name type="scientific">Methanopyrus kandleri (strain AV19 / DSM 6324 / JCM 9639 / NBRC 100938)</name>
    <dbReference type="NCBI Taxonomy" id="190192"/>
    <lineage>
        <taxon>Archaea</taxon>
        <taxon>Methanobacteriati</taxon>
        <taxon>Methanobacteriota</taxon>
        <taxon>Methanomada group</taxon>
        <taxon>Methanopyri</taxon>
        <taxon>Methanopyrales</taxon>
        <taxon>Methanopyraceae</taxon>
        <taxon>Methanopyrus</taxon>
    </lineage>
</organism>
<name>CARB2_METKA</name>
<dbReference type="EC" id="6.3.4.16" evidence="1"/>
<dbReference type="EC" id="6.3.5.5" evidence="1"/>
<dbReference type="EMBL" id="AE009439">
    <property type="protein sequence ID" value="AAM02879.1"/>
    <property type="molecule type" value="Genomic_DNA"/>
</dbReference>
<dbReference type="RefSeq" id="WP_011020034.1">
    <property type="nucleotide sequence ID" value="NC_003551.1"/>
</dbReference>
<dbReference type="SMR" id="Q8TUT7"/>
<dbReference type="FunCoup" id="Q8TUT7">
    <property type="interactions" value="195"/>
</dbReference>
<dbReference type="STRING" id="190192.MK1666"/>
<dbReference type="PaxDb" id="190192-MK1666"/>
<dbReference type="EnsemblBacteria" id="AAM02879">
    <property type="protein sequence ID" value="AAM02879"/>
    <property type="gene ID" value="MK1666"/>
</dbReference>
<dbReference type="GeneID" id="1478261"/>
<dbReference type="KEGG" id="mka:MK1666"/>
<dbReference type="PATRIC" id="fig|190192.8.peg.1830"/>
<dbReference type="HOGENOM" id="CLU_000513_3_4_2"/>
<dbReference type="InParanoid" id="Q8TUT7"/>
<dbReference type="OrthoDB" id="85487at2157"/>
<dbReference type="UniPathway" id="UPA00068">
    <property type="reaction ID" value="UER00171"/>
</dbReference>
<dbReference type="UniPathway" id="UPA00070">
    <property type="reaction ID" value="UER00115"/>
</dbReference>
<dbReference type="Proteomes" id="UP000001826">
    <property type="component" value="Chromosome"/>
</dbReference>
<dbReference type="GO" id="GO:0005737">
    <property type="term" value="C:cytoplasm"/>
    <property type="evidence" value="ECO:0007669"/>
    <property type="project" value="TreeGrafter"/>
</dbReference>
<dbReference type="GO" id="GO:0005524">
    <property type="term" value="F:ATP binding"/>
    <property type="evidence" value="ECO:0007669"/>
    <property type="project" value="UniProtKB-KW"/>
</dbReference>
<dbReference type="GO" id="GO:0004087">
    <property type="term" value="F:carbamoyl-phosphate synthase (ammonia) activity"/>
    <property type="evidence" value="ECO:0007669"/>
    <property type="project" value="RHEA"/>
</dbReference>
<dbReference type="GO" id="GO:0004088">
    <property type="term" value="F:carbamoyl-phosphate synthase (glutamine-hydrolyzing) activity"/>
    <property type="evidence" value="ECO:0007669"/>
    <property type="project" value="UniProtKB-EC"/>
</dbReference>
<dbReference type="GO" id="GO:0046872">
    <property type="term" value="F:metal ion binding"/>
    <property type="evidence" value="ECO:0007669"/>
    <property type="project" value="UniProtKB-KW"/>
</dbReference>
<dbReference type="GO" id="GO:0044205">
    <property type="term" value="P:'de novo' UMP biosynthetic process"/>
    <property type="evidence" value="ECO:0007669"/>
    <property type="project" value="UniProtKB-UniPathway"/>
</dbReference>
<dbReference type="GO" id="GO:0006541">
    <property type="term" value="P:glutamine metabolic process"/>
    <property type="evidence" value="ECO:0007669"/>
    <property type="project" value="TreeGrafter"/>
</dbReference>
<dbReference type="GO" id="GO:0006526">
    <property type="term" value="P:L-arginine biosynthetic process"/>
    <property type="evidence" value="ECO:0007669"/>
    <property type="project" value="UniProtKB-UniPathway"/>
</dbReference>
<dbReference type="CDD" id="cd01424">
    <property type="entry name" value="MGS_CPS_II"/>
    <property type="match status" value="1"/>
</dbReference>
<dbReference type="FunFam" id="3.30.1490.20:FF:000001">
    <property type="entry name" value="Carbamoyl-phosphate synthase large chain"/>
    <property type="match status" value="1"/>
</dbReference>
<dbReference type="FunFam" id="3.30.470.20:FF:000026">
    <property type="entry name" value="Carbamoyl-phosphate synthase large chain"/>
    <property type="match status" value="1"/>
</dbReference>
<dbReference type="FunFam" id="3.40.50.20:FF:000002">
    <property type="entry name" value="Carbamoyl-phosphate synthase large chain"/>
    <property type="match status" value="1"/>
</dbReference>
<dbReference type="Gene3D" id="3.40.50.20">
    <property type="match status" value="1"/>
</dbReference>
<dbReference type="Gene3D" id="3.30.1490.20">
    <property type="entry name" value="ATP-grasp fold, A domain"/>
    <property type="match status" value="1"/>
</dbReference>
<dbReference type="Gene3D" id="3.30.470.20">
    <property type="entry name" value="ATP-grasp fold, B domain"/>
    <property type="match status" value="1"/>
</dbReference>
<dbReference type="Gene3D" id="3.40.50.1380">
    <property type="entry name" value="Methylglyoxal synthase-like domain"/>
    <property type="match status" value="1"/>
</dbReference>
<dbReference type="InterPro" id="IPR011761">
    <property type="entry name" value="ATP-grasp"/>
</dbReference>
<dbReference type="InterPro" id="IPR013815">
    <property type="entry name" value="ATP_grasp_subdomain_1"/>
</dbReference>
<dbReference type="InterPro" id="IPR005479">
    <property type="entry name" value="CbamoylP_synth_lsu-like_ATP-bd"/>
</dbReference>
<dbReference type="InterPro" id="IPR005483">
    <property type="entry name" value="CbamoylP_synth_lsu_CPSase_dom"/>
</dbReference>
<dbReference type="InterPro" id="IPR011607">
    <property type="entry name" value="MGS-like_dom"/>
</dbReference>
<dbReference type="InterPro" id="IPR036914">
    <property type="entry name" value="MGS-like_dom_sf"/>
</dbReference>
<dbReference type="InterPro" id="IPR033937">
    <property type="entry name" value="MGS_CPS_CarB"/>
</dbReference>
<dbReference type="InterPro" id="IPR016185">
    <property type="entry name" value="PreATP-grasp_dom_sf"/>
</dbReference>
<dbReference type="NCBIfam" id="NF003671">
    <property type="entry name" value="PRK05294.1"/>
    <property type="match status" value="1"/>
</dbReference>
<dbReference type="PANTHER" id="PTHR11405:SF53">
    <property type="entry name" value="CARBAMOYL-PHOSPHATE SYNTHASE [AMMONIA], MITOCHONDRIAL"/>
    <property type="match status" value="1"/>
</dbReference>
<dbReference type="PANTHER" id="PTHR11405">
    <property type="entry name" value="CARBAMOYLTRANSFERASE FAMILY MEMBER"/>
    <property type="match status" value="1"/>
</dbReference>
<dbReference type="Pfam" id="PF02786">
    <property type="entry name" value="CPSase_L_D2"/>
    <property type="match status" value="1"/>
</dbReference>
<dbReference type="Pfam" id="PF02142">
    <property type="entry name" value="MGS"/>
    <property type="match status" value="1"/>
</dbReference>
<dbReference type="PRINTS" id="PR00098">
    <property type="entry name" value="CPSASE"/>
</dbReference>
<dbReference type="SMART" id="SM00851">
    <property type="entry name" value="MGS"/>
    <property type="match status" value="1"/>
</dbReference>
<dbReference type="SUPFAM" id="SSF56059">
    <property type="entry name" value="Glutathione synthetase ATP-binding domain-like"/>
    <property type="match status" value="1"/>
</dbReference>
<dbReference type="SUPFAM" id="SSF52335">
    <property type="entry name" value="Methylglyoxal synthase-like"/>
    <property type="match status" value="1"/>
</dbReference>
<dbReference type="SUPFAM" id="SSF52440">
    <property type="entry name" value="PreATP-grasp domain"/>
    <property type="match status" value="1"/>
</dbReference>
<dbReference type="PROSITE" id="PS50975">
    <property type="entry name" value="ATP_GRASP"/>
    <property type="match status" value="1"/>
</dbReference>
<dbReference type="PROSITE" id="PS00866">
    <property type="entry name" value="CPSASE_1"/>
    <property type="match status" value="1"/>
</dbReference>
<dbReference type="PROSITE" id="PS00867">
    <property type="entry name" value="CPSASE_2"/>
    <property type="match status" value="1"/>
</dbReference>
<dbReference type="PROSITE" id="PS51855">
    <property type="entry name" value="MGS"/>
    <property type="match status" value="1"/>
</dbReference>